<reference evidence="11" key="1">
    <citation type="journal article" date="2001" name="Development">
        <title>Su(z)12, a novel Drosophila Polycomb group gene that is conserved in vertebrates and plants.</title>
        <authorList>
            <person name="Birve A."/>
            <person name="Sengupta A.K."/>
            <person name="Beuchle D."/>
            <person name="Larsson J."/>
            <person name="Kennison J.A."/>
            <person name="Rasmuson-Lestander A."/>
            <person name="Mueller J."/>
        </authorList>
    </citation>
    <scope>NUCLEOTIDE SEQUENCE [MRNA] (ISOFORM 1)</scope>
    <scope>CHARACTERIZATION</scope>
    <scope>MUTAGENESIS OF GLY-274</scope>
</reference>
<reference key="2">
    <citation type="journal article" date="2000" name="Science">
        <title>The genome sequence of Drosophila melanogaster.</title>
        <authorList>
            <person name="Adams M.D."/>
            <person name="Celniker S.E."/>
            <person name="Holt R.A."/>
            <person name="Evans C.A."/>
            <person name="Gocayne J.D."/>
            <person name="Amanatides P.G."/>
            <person name="Scherer S.E."/>
            <person name="Li P.W."/>
            <person name="Hoskins R.A."/>
            <person name="Galle R.F."/>
            <person name="George R.A."/>
            <person name="Lewis S.E."/>
            <person name="Richards S."/>
            <person name="Ashburner M."/>
            <person name="Henderson S.N."/>
            <person name="Sutton G.G."/>
            <person name="Wortman J.R."/>
            <person name="Yandell M.D."/>
            <person name="Zhang Q."/>
            <person name="Chen L.X."/>
            <person name="Brandon R.C."/>
            <person name="Rogers Y.-H.C."/>
            <person name="Blazej R.G."/>
            <person name="Champe M."/>
            <person name="Pfeiffer B.D."/>
            <person name="Wan K.H."/>
            <person name="Doyle C."/>
            <person name="Baxter E.G."/>
            <person name="Helt G."/>
            <person name="Nelson C.R."/>
            <person name="Miklos G.L.G."/>
            <person name="Abril J.F."/>
            <person name="Agbayani A."/>
            <person name="An H.-J."/>
            <person name="Andrews-Pfannkoch C."/>
            <person name="Baldwin D."/>
            <person name="Ballew R.M."/>
            <person name="Basu A."/>
            <person name="Baxendale J."/>
            <person name="Bayraktaroglu L."/>
            <person name="Beasley E.M."/>
            <person name="Beeson K.Y."/>
            <person name="Benos P.V."/>
            <person name="Berman B.P."/>
            <person name="Bhandari D."/>
            <person name="Bolshakov S."/>
            <person name="Borkova D."/>
            <person name="Botchan M.R."/>
            <person name="Bouck J."/>
            <person name="Brokstein P."/>
            <person name="Brottier P."/>
            <person name="Burtis K.C."/>
            <person name="Busam D.A."/>
            <person name="Butler H."/>
            <person name="Cadieu E."/>
            <person name="Center A."/>
            <person name="Chandra I."/>
            <person name="Cherry J.M."/>
            <person name="Cawley S."/>
            <person name="Dahlke C."/>
            <person name="Davenport L.B."/>
            <person name="Davies P."/>
            <person name="de Pablos B."/>
            <person name="Delcher A."/>
            <person name="Deng Z."/>
            <person name="Mays A.D."/>
            <person name="Dew I."/>
            <person name="Dietz S.M."/>
            <person name="Dodson K."/>
            <person name="Doup L.E."/>
            <person name="Downes M."/>
            <person name="Dugan-Rocha S."/>
            <person name="Dunkov B.C."/>
            <person name="Dunn P."/>
            <person name="Durbin K.J."/>
            <person name="Evangelista C.C."/>
            <person name="Ferraz C."/>
            <person name="Ferriera S."/>
            <person name="Fleischmann W."/>
            <person name="Fosler C."/>
            <person name="Gabrielian A.E."/>
            <person name="Garg N.S."/>
            <person name="Gelbart W.M."/>
            <person name="Glasser K."/>
            <person name="Glodek A."/>
            <person name="Gong F."/>
            <person name="Gorrell J.H."/>
            <person name="Gu Z."/>
            <person name="Guan P."/>
            <person name="Harris M."/>
            <person name="Harris N.L."/>
            <person name="Harvey D.A."/>
            <person name="Heiman T.J."/>
            <person name="Hernandez J.R."/>
            <person name="Houck J."/>
            <person name="Hostin D."/>
            <person name="Houston K.A."/>
            <person name="Howland T.J."/>
            <person name="Wei M.-H."/>
            <person name="Ibegwam C."/>
            <person name="Jalali M."/>
            <person name="Kalush F."/>
            <person name="Karpen G.H."/>
            <person name="Ke Z."/>
            <person name="Kennison J.A."/>
            <person name="Ketchum K.A."/>
            <person name="Kimmel B.E."/>
            <person name="Kodira C.D."/>
            <person name="Kraft C.L."/>
            <person name="Kravitz S."/>
            <person name="Kulp D."/>
            <person name="Lai Z."/>
            <person name="Lasko P."/>
            <person name="Lei Y."/>
            <person name="Levitsky A.A."/>
            <person name="Li J.H."/>
            <person name="Li Z."/>
            <person name="Liang Y."/>
            <person name="Lin X."/>
            <person name="Liu X."/>
            <person name="Mattei B."/>
            <person name="McIntosh T.C."/>
            <person name="McLeod M.P."/>
            <person name="McPherson D."/>
            <person name="Merkulov G."/>
            <person name="Milshina N.V."/>
            <person name="Mobarry C."/>
            <person name="Morris J."/>
            <person name="Moshrefi A."/>
            <person name="Mount S.M."/>
            <person name="Moy M."/>
            <person name="Murphy B."/>
            <person name="Murphy L."/>
            <person name="Muzny D.M."/>
            <person name="Nelson D.L."/>
            <person name="Nelson D.R."/>
            <person name="Nelson K.A."/>
            <person name="Nixon K."/>
            <person name="Nusskern D.R."/>
            <person name="Pacleb J.M."/>
            <person name="Palazzolo M."/>
            <person name="Pittman G.S."/>
            <person name="Pan S."/>
            <person name="Pollard J."/>
            <person name="Puri V."/>
            <person name="Reese M.G."/>
            <person name="Reinert K."/>
            <person name="Remington K."/>
            <person name="Saunders R.D.C."/>
            <person name="Scheeler F."/>
            <person name="Shen H."/>
            <person name="Shue B.C."/>
            <person name="Siden-Kiamos I."/>
            <person name="Simpson M."/>
            <person name="Skupski M.P."/>
            <person name="Smith T.J."/>
            <person name="Spier E."/>
            <person name="Spradling A.C."/>
            <person name="Stapleton M."/>
            <person name="Strong R."/>
            <person name="Sun E."/>
            <person name="Svirskas R."/>
            <person name="Tector C."/>
            <person name="Turner R."/>
            <person name="Venter E."/>
            <person name="Wang A.H."/>
            <person name="Wang X."/>
            <person name="Wang Z.-Y."/>
            <person name="Wassarman D.A."/>
            <person name="Weinstock G.M."/>
            <person name="Weissenbach J."/>
            <person name="Williams S.M."/>
            <person name="Woodage T."/>
            <person name="Worley K.C."/>
            <person name="Wu D."/>
            <person name="Yang S."/>
            <person name="Yao Q.A."/>
            <person name="Ye J."/>
            <person name="Yeh R.-F."/>
            <person name="Zaveri J.S."/>
            <person name="Zhan M."/>
            <person name="Zhang G."/>
            <person name="Zhao Q."/>
            <person name="Zheng L."/>
            <person name="Zheng X.H."/>
            <person name="Zhong F.N."/>
            <person name="Zhong W."/>
            <person name="Zhou X."/>
            <person name="Zhu S.C."/>
            <person name="Zhu X."/>
            <person name="Smith H.O."/>
            <person name="Gibbs R.A."/>
            <person name="Myers E.W."/>
            <person name="Rubin G.M."/>
            <person name="Venter J.C."/>
        </authorList>
    </citation>
    <scope>NUCLEOTIDE SEQUENCE [LARGE SCALE GENOMIC DNA]</scope>
    <source>
        <strain>Berkeley</strain>
    </source>
</reference>
<reference key="3">
    <citation type="journal article" date="2002" name="Genome Biol.">
        <title>Annotation of the Drosophila melanogaster euchromatic genome: a systematic review.</title>
        <authorList>
            <person name="Misra S."/>
            <person name="Crosby M.A."/>
            <person name="Mungall C.J."/>
            <person name="Matthews B.B."/>
            <person name="Campbell K.S."/>
            <person name="Hradecky P."/>
            <person name="Huang Y."/>
            <person name="Kaminker J.S."/>
            <person name="Millburn G.H."/>
            <person name="Prochnik S.E."/>
            <person name="Smith C.D."/>
            <person name="Tupy J.L."/>
            <person name="Whitfield E.J."/>
            <person name="Bayraktaroglu L."/>
            <person name="Berman B.P."/>
            <person name="Bettencourt B.R."/>
            <person name="Celniker S.E."/>
            <person name="de Grey A.D.N.J."/>
            <person name="Drysdale R.A."/>
            <person name="Harris N.L."/>
            <person name="Richter J."/>
            <person name="Russo S."/>
            <person name="Schroeder A.J."/>
            <person name="Shu S.Q."/>
            <person name="Stapleton M."/>
            <person name="Yamada C."/>
            <person name="Ashburner M."/>
            <person name="Gelbart W.M."/>
            <person name="Rubin G.M."/>
            <person name="Lewis S.E."/>
        </authorList>
    </citation>
    <scope>GENOME REANNOTATION</scope>
    <scope>ALTERNATIVE SPLICING</scope>
    <source>
        <strain>Berkeley</strain>
    </source>
</reference>
<reference key="4">
    <citation type="journal article" date="2002" name="Genome Biol.">
        <title>A Drosophila full-length cDNA resource.</title>
        <authorList>
            <person name="Stapleton M."/>
            <person name="Carlson J.W."/>
            <person name="Brokstein P."/>
            <person name="Yu C."/>
            <person name="Champe M."/>
            <person name="George R.A."/>
            <person name="Guarin H."/>
            <person name="Kronmiller B."/>
            <person name="Pacleb J.M."/>
            <person name="Park S."/>
            <person name="Wan K.H."/>
            <person name="Rubin G.M."/>
            <person name="Celniker S.E."/>
        </authorList>
    </citation>
    <scope>NUCLEOTIDE SEQUENCE [LARGE SCALE MRNA] (ISOFORM 2)</scope>
    <source>
        <strain>Berkeley</strain>
        <tissue>Embryo</tissue>
    </source>
</reference>
<reference key="5">
    <citation type="journal article" date="2002" name="Cell">
        <title>Drosophila Enhancer of zeste/ESC complexes have a histone H3 methyltransferase activity that marks chromosomal Polycomb sites.</title>
        <authorList>
            <person name="Czermin B."/>
            <person name="Melfi R."/>
            <person name="McCabe D."/>
            <person name="Seitz V."/>
            <person name="Imhof A."/>
            <person name="Pirrotta V."/>
        </authorList>
    </citation>
    <scope>IDENTIFICATION IN AN ESC/E(Z) COMPLEX WITH CAF1-55; ESC; E(Z) AND HDAC1</scope>
    <scope>METHYLTRANSFERASE ACTIVITY OF THE COMPLEX</scope>
</reference>
<reference key="6">
    <citation type="journal article" date="2002" name="Cell">
        <title>Histone methyltransferase activity of a Drosophila Polycomb group repressor complex.</title>
        <authorList>
            <person name="Mueller J."/>
            <person name="Hart C.M."/>
            <person name="Francis N.J."/>
            <person name="Vargas M.L."/>
            <person name="Sengupta A."/>
            <person name="Wild B."/>
            <person name="Miller E.L."/>
            <person name="O'Connor M.B."/>
            <person name="Kingston R.E."/>
            <person name="Simon J.A."/>
        </authorList>
    </citation>
    <scope>IDENTIFICATION IN AN ESC/E(Z) COMPLEX WITH CAF1-55; ESC AND E(Z)</scope>
    <scope>METHYLTRANSFERASE ACTIVITY OF THE COMPLEX</scope>
</reference>
<reference key="7">
    <citation type="journal article" date="2003" name="Mol. Cell. Biol.">
        <title>A 1-megadalton ESC/E(Z) complex from Drosophila that contains polycomblike and RPD3.</title>
        <authorList>
            <person name="Tie F."/>
            <person name="Prasad-Sinha J."/>
            <person name="Birve A."/>
            <person name="Rasmuson-Lestander A."/>
            <person name="Harte P.J."/>
        </authorList>
    </citation>
    <scope>IDENTIFICATION IN AN ESC/E(Z) COMPLEX WITH CAF1-55; ESC; E(Z); PCL AND HDAC1</scope>
</reference>
<reference key="8">
    <citation type="journal article" date="2007" name="Mol. Biosyst.">
        <title>An integrated chemical, mass spectrometric and computational strategy for (quantitative) phosphoproteomics: application to Drosophila melanogaster Kc167 cells.</title>
        <authorList>
            <person name="Bodenmiller B."/>
            <person name="Mueller L.N."/>
            <person name="Pedrioli P.G.A."/>
            <person name="Pflieger D."/>
            <person name="Juenger M.A."/>
            <person name="Eng J.K."/>
            <person name="Aebersold R."/>
            <person name="Tao W.A."/>
        </authorList>
    </citation>
    <scope>PHOSPHORYLATION [LARGE SCALE ANALYSIS] AT SER-547</scope>
    <scope>IDENTIFICATION BY MASS SPECTROMETRY</scope>
</reference>
<reference key="9">
    <citation type="journal article" date="2012" name="Mol. Cell. Biol.">
        <title>Polycomb repressive complex 2-dependent and -independent functions of Jarid2 in transcriptional regulation in Drosophila.</title>
        <authorList>
            <person name="Herz H.M."/>
            <person name="Mohan M."/>
            <person name="Garrett A.S."/>
            <person name="Miller C."/>
            <person name="Casto D."/>
            <person name="Zhang Y."/>
            <person name="Seidel C."/>
            <person name="Haug J.S."/>
            <person name="Florens L."/>
            <person name="Washburn M.P."/>
            <person name="Yamaguchi M."/>
            <person name="Shiekhattar R."/>
            <person name="Shilatifard A."/>
        </authorList>
    </citation>
    <scope>IDENTIFICATION IN THE PRC2.2 COMPLEX</scope>
    <scope>SUBCELLULAR LOCATION</scope>
    <scope>IDENTIFICATION BY MASS SPECTROMETRY</scope>
</reference>
<gene>
    <name type="primary">Su(z)12</name>
    <name type="ORF">CG8013</name>
</gene>
<feature type="chain" id="PRO_0000047059" description="Polycomb protein Su(z)12">
    <location>
        <begin position="1"/>
        <end position="900"/>
    </location>
</feature>
<feature type="zinc finger region" description="C2H2-type">
    <location>
        <begin position="411"/>
        <end position="434"/>
    </location>
</feature>
<feature type="region of interest" description="Disordered" evidence="1">
    <location>
        <begin position="1"/>
        <end position="44"/>
    </location>
</feature>
<feature type="region of interest" description="VEFS-box">
    <location>
        <begin position="527"/>
        <end position="603"/>
    </location>
</feature>
<feature type="region of interest" description="Disordered" evidence="1">
    <location>
        <begin position="678"/>
        <end position="900"/>
    </location>
</feature>
<feature type="compositionally biased region" description="Basic and acidic residues" evidence="1">
    <location>
        <begin position="1"/>
        <end position="12"/>
    </location>
</feature>
<feature type="compositionally biased region" description="Low complexity" evidence="1">
    <location>
        <begin position="698"/>
        <end position="714"/>
    </location>
</feature>
<feature type="compositionally biased region" description="Low complexity" evidence="1">
    <location>
        <begin position="738"/>
        <end position="757"/>
    </location>
</feature>
<feature type="compositionally biased region" description="Basic and acidic residues" evidence="1">
    <location>
        <begin position="773"/>
        <end position="782"/>
    </location>
</feature>
<feature type="compositionally biased region" description="Gly residues" evidence="1">
    <location>
        <begin position="820"/>
        <end position="834"/>
    </location>
</feature>
<feature type="compositionally biased region" description="Low complexity" evidence="1">
    <location>
        <begin position="850"/>
        <end position="862"/>
    </location>
</feature>
<feature type="modified residue" description="Phosphoserine" evidence="6">
    <location>
        <position position="547"/>
    </location>
</feature>
<feature type="splice variant" id="VSP_007033" description="In isoform 2." evidence="8">
    <original>NTVLNKRQRYSDGSPGTGIGNGHGGGSGSGANRNKSNNHSLPATSNNASS</original>
    <variation>VEQAADAPEVLTHSDNAVDVGIIDDECGGFGAVGVMNGVASPVANNCVGN</variation>
    <location>
        <begin position="806"/>
        <end position="855"/>
    </location>
</feature>
<feature type="splice variant" id="VSP_007034" description="In isoform 2." evidence="8">
    <location>
        <begin position="856"/>
        <end position="900"/>
    </location>
</feature>
<feature type="mutagenesis site" description="In Su(z)12-2; induces larval lethality; when homozygous." evidence="2">
    <original>G</original>
    <variation>D</variation>
    <location>
        <position position="274"/>
    </location>
</feature>
<feature type="helix" evidence="12">
    <location>
        <begin position="84"/>
        <end position="86"/>
    </location>
</feature>
<feature type="helix" evidence="12">
    <location>
        <begin position="88"/>
        <end position="90"/>
    </location>
</feature>
<accession>Q9NJG9</accession>
<accession>Q8T9D8</accession>
<accession>Q9VW55</accession>
<proteinExistence type="evidence at protein level"/>
<keyword id="KW-0002">3D-structure</keyword>
<keyword id="KW-0025">Alternative splicing</keyword>
<keyword id="KW-0156">Chromatin regulator</keyword>
<keyword id="KW-0158">Chromosome</keyword>
<keyword id="KW-0217">Developmental protein</keyword>
<keyword id="KW-0479">Metal-binding</keyword>
<keyword id="KW-0539">Nucleus</keyword>
<keyword id="KW-0597">Phosphoprotein</keyword>
<keyword id="KW-1185">Reference proteome</keyword>
<keyword id="KW-0678">Repressor</keyword>
<keyword id="KW-0804">Transcription</keyword>
<keyword id="KW-0805">Transcription regulation</keyword>
<keyword id="KW-0862">Zinc</keyword>
<keyword id="KW-0863">Zinc-finger</keyword>
<evidence type="ECO:0000256" key="1">
    <source>
        <dbReference type="SAM" id="MobiDB-lite"/>
    </source>
</evidence>
<evidence type="ECO:0000269" key="2">
    <source>
    </source>
</evidence>
<evidence type="ECO:0000269" key="3">
    <source>
    </source>
</evidence>
<evidence type="ECO:0000269" key="4">
    <source>
    </source>
</evidence>
<evidence type="ECO:0000269" key="5">
    <source>
    </source>
</evidence>
<evidence type="ECO:0000269" key="6">
    <source>
    </source>
</evidence>
<evidence type="ECO:0000269" key="7">
    <source>
    </source>
</evidence>
<evidence type="ECO:0000303" key="8">
    <source>
    </source>
</evidence>
<evidence type="ECO:0000305" key="9"/>
<evidence type="ECO:0000305" key="10">
    <source>
    </source>
</evidence>
<evidence type="ECO:0000312" key="11">
    <source>
        <dbReference type="EMBL" id="AAF73149.1"/>
    </source>
</evidence>
<evidence type="ECO:0007829" key="12">
    <source>
        <dbReference type="PDB" id="2YB8"/>
    </source>
</evidence>
<organism>
    <name type="scientific">Drosophila melanogaster</name>
    <name type="common">Fruit fly</name>
    <dbReference type="NCBI Taxonomy" id="7227"/>
    <lineage>
        <taxon>Eukaryota</taxon>
        <taxon>Metazoa</taxon>
        <taxon>Ecdysozoa</taxon>
        <taxon>Arthropoda</taxon>
        <taxon>Hexapoda</taxon>
        <taxon>Insecta</taxon>
        <taxon>Pterygota</taxon>
        <taxon>Neoptera</taxon>
        <taxon>Endopterygota</taxon>
        <taxon>Diptera</taxon>
        <taxon>Brachycera</taxon>
        <taxon>Muscomorpha</taxon>
        <taxon>Ephydroidea</taxon>
        <taxon>Drosophilidae</taxon>
        <taxon>Drosophila</taxon>
        <taxon>Sophophora</taxon>
    </lineage>
</organism>
<dbReference type="EMBL" id="AF149047">
    <property type="protein sequence ID" value="AAF73149.1"/>
    <property type="molecule type" value="mRNA"/>
</dbReference>
<dbReference type="EMBL" id="AE014296">
    <property type="protein sequence ID" value="AAF49094.2"/>
    <property type="molecule type" value="Genomic_DNA"/>
</dbReference>
<dbReference type="EMBL" id="AE014296">
    <property type="protein sequence ID" value="AAN11641.1"/>
    <property type="molecule type" value="Genomic_DNA"/>
</dbReference>
<dbReference type="EMBL" id="AY069809">
    <property type="protein sequence ID" value="AAL39954.1"/>
    <property type="molecule type" value="mRNA"/>
</dbReference>
<dbReference type="RefSeq" id="NP_652059.1">
    <molecule id="Q9NJG9-2"/>
    <property type="nucleotide sequence ID" value="NM_143802.3"/>
</dbReference>
<dbReference type="RefSeq" id="NP_730465.1">
    <molecule id="Q9NJG9-1"/>
    <property type="nucleotide sequence ID" value="NM_168826.2"/>
</dbReference>
<dbReference type="PDB" id="2YB8">
    <property type="method" value="X-ray"/>
    <property type="resolution" value="2.30 A"/>
    <property type="chains" value="A=79-91"/>
</dbReference>
<dbReference type="PDBsum" id="2YB8"/>
<dbReference type="SMR" id="Q9NJG9"/>
<dbReference type="BioGRID" id="71118">
    <property type="interactions" value="19"/>
</dbReference>
<dbReference type="ComplexPortal" id="CPX-2591">
    <property type="entry name" value="Polycomb repressive complex 2, Pcl variant"/>
</dbReference>
<dbReference type="ComplexPortal" id="CPX-2603">
    <property type="entry name" value="Polycomb repressive complex 2, Jarid2-jing variant"/>
</dbReference>
<dbReference type="FunCoup" id="Q9NJG9">
    <property type="interactions" value="2169"/>
</dbReference>
<dbReference type="IntAct" id="Q9NJG9">
    <property type="interactions" value="14"/>
</dbReference>
<dbReference type="MINT" id="Q9NJG9"/>
<dbReference type="STRING" id="7227.FBpp0074686"/>
<dbReference type="iPTMnet" id="Q9NJG9"/>
<dbReference type="PaxDb" id="7227-FBpp0074686"/>
<dbReference type="DNASU" id="48071"/>
<dbReference type="EnsemblMetazoa" id="FBtr0074916">
    <molecule id="Q9NJG9-2"/>
    <property type="protein sequence ID" value="FBpp0074685"/>
    <property type="gene ID" value="FBgn0020887"/>
</dbReference>
<dbReference type="EnsemblMetazoa" id="FBtr0074917">
    <molecule id="Q9NJG9-1"/>
    <property type="protein sequence ID" value="FBpp0074686"/>
    <property type="gene ID" value="FBgn0020887"/>
</dbReference>
<dbReference type="GeneID" id="48071"/>
<dbReference type="KEGG" id="dme:Dmel_CG8013"/>
<dbReference type="AGR" id="FB:FBgn0020887"/>
<dbReference type="CTD" id="48071"/>
<dbReference type="FlyBase" id="FBgn0020887">
    <property type="gene designation" value="Su(z)12"/>
</dbReference>
<dbReference type="VEuPathDB" id="VectorBase:FBgn0020887"/>
<dbReference type="eggNOG" id="KOG2350">
    <property type="taxonomic scope" value="Eukaryota"/>
</dbReference>
<dbReference type="GeneTree" id="ENSGT00390000012364"/>
<dbReference type="InParanoid" id="Q9NJG9"/>
<dbReference type="OMA" id="VDGMLTK"/>
<dbReference type="OrthoDB" id="166746at2759"/>
<dbReference type="PhylomeDB" id="Q9NJG9"/>
<dbReference type="Reactome" id="R-DME-212300">
    <property type="pathway name" value="PRC2 methylates histones and DNA"/>
</dbReference>
<dbReference type="Reactome" id="R-DME-2559580">
    <property type="pathway name" value="Oxidative Stress Induced Senescence"/>
</dbReference>
<dbReference type="Reactome" id="R-DME-8943724">
    <property type="pathway name" value="Regulation of PTEN gene transcription"/>
</dbReference>
<dbReference type="Reactome" id="R-DME-8953750">
    <property type="pathway name" value="Transcriptional Regulation by E2F6"/>
</dbReference>
<dbReference type="SignaLink" id="Q9NJG9"/>
<dbReference type="BioGRID-ORCS" id="48071">
    <property type="hits" value="1 hit in 1 CRISPR screen"/>
</dbReference>
<dbReference type="CD-CODE" id="58FDC23F">
    <property type="entry name" value="PcG body"/>
</dbReference>
<dbReference type="ChiTaRS" id="Su(z)12">
    <property type="organism name" value="fly"/>
</dbReference>
<dbReference type="EvolutionaryTrace" id="Q9NJG9"/>
<dbReference type="GenomeRNAi" id="48071"/>
<dbReference type="PRO" id="PR:Q9NJG9"/>
<dbReference type="Proteomes" id="UP000000803">
    <property type="component" value="Chromosome 3L"/>
</dbReference>
<dbReference type="Bgee" id="FBgn0020887">
    <property type="expression patterns" value="Expressed in fat body cell in Malpighian tubule and 153 other cell types or tissues"/>
</dbReference>
<dbReference type="GO" id="GO:0000785">
    <property type="term" value="C:chromatin"/>
    <property type="evidence" value="ECO:0000303"/>
    <property type="project" value="UniProtKB"/>
</dbReference>
<dbReference type="GO" id="GO:0035098">
    <property type="term" value="C:ESC/E(Z) complex"/>
    <property type="evidence" value="ECO:0000314"/>
    <property type="project" value="FlyBase"/>
</dbReference>
<dbReference type="GO" id="GO:0035097">
    <property type="term" value="C:histone methyltransferase complex"/>
    <property type="evidence" value="ECO:0000314"/>
    <property type="project" value="FlyBase"/>
</dbReference>
<dbReference type="GO" id="GO:0005634">
    <property type="term" value="C:nucleus"/>
    <property type="evidence" value="ECO:0000314"/>
    <property type="project" value="FlyBase"/>
</dbReference>
<dbReference type="GO" id="GO:0016586">
    <property type="term" value="C:RSC-type complex"/>
    <property type="evidence" value="ECO:0000318"/>
    <property type="project" value="GO_Central"/>
</dbReference>
<dbReference type="GO" id="GO:0031490">
    <property type="term" value="F:chromatin DNA binding"/>
    <property type="evidence" value="ECO:0000318"/>
    <property type="project" value="GO_Central"/>
</dbReference>
<dbReference type="GO" id="GO:0003677">
    <property type="term" value="F:DNA binding"/>
    <property type="evidence" value="ECO:0000303"/>
    <property type="project" value="UniProtKB"/>
</dbReference>
<dbReference type="GO" id="GO:0008270">
    <property type="term" value="F:zinc ion binding"/>
    <property type="evidence" value="ECO:0007669"/>
    <property type="project" value="UniProtKB-KW"/>
</dbReference>
<dbReference type="GO" id="GO:0140718">
    <property type="term" value="P:facultative heterochromatin formation"/>
    <property type="evidence" value="ECO:0000305"/>
    <property type="project" value="FlyBase"/>
</dbReference>
<dbReference type="GO" id="GO:0045892">
    <property type="term" value="P:negative regulation of DNA-templated transcription"/>
    <property type="evidence" value="ECO:0000303"/>
    <property type="project" value="UniProtKB"/>
</dbReference>
<dbReference type="GO" id="GO:2001229">
    <property type="term" value="P:negative regulation of response to gamma radiation"/>
    <property type="evidence" value="ECO:0000315"/>
    <property type="project" value="FlyBase"/>
</dbReference>
<dbReference type="GO" id="GO:0022008">
    <property type="term" value="P:neurogenesis"/>
    <property type="evidence" value="ECO:0000315"/>
    <property type="project" value="FlyBase"/>
</dbReference>
<dbReference type="CDD" id="cd21740">
    <property type="entry name" value="C2_II_SUZ12"/>
    <property type="match status" value="1"/>
</dbReference>
<dbReference type="CDD" id="cd21551">
    <property type="entry name" value="VEFS-box_SUZ12"/>
    <property type="match status" value="1"/>
</dbReference>
<dbReference type="CDD" id="cd21750">
    <property type="entry name" value="ZnB-Zn_SUZ12"/>
    <property type="match status" value="1"/>
</dbReference>
<dbReference type="InterPro" id="IPR019135">
    <property type="entry name" value="Polycomb_protein_VEFS-Box"/>
</dbReference>
<dbReference type="PANTHER" id="PTHR22597">
    <property type="entry name" value="POLYCOMB GROUP PROTEIN"/>
    <property type="match status" value="1"/>
</dbReference>
<dbReference type="PANTHER" id="PTHR22597:SF0">
    <property type="entry name" value="POLYCOMB PROTEIN SUZ12"/>
    <property type="match status" value="1"/>
</dbReference>
<dbReference type="Pfam" id="PF09733">
    <property type="entry name" value="VEFS-Box"/>
    <property type="match status" value="1"/>
</dbReference>
<dbReference type="Pfam" id="PF23320">
    <property type="entry name" value="Zn_SUZ12"/>
    <property type="match status" value="1"/>
</dbReference>
<dbReference type="PROSITE" id="PS00028">
    <property type="entry name" value="ZINC_FINGER_C2H2_1"/>
    <property type="match status" value="1"/>
</dbReference>
<protein>
    <recommendedName>
        <fullName>Polycomb protein Su(z)12</fullName>
    </recommendedName>
    <alternativeName>
        <fullName>Suppressor 12 of zeste protein</fullName>
    </alternativeName>
</protein>
<name>SUZ12_DROME</name>
<sequence>MAPAKKREKDSNPDGSAANGIIGLTHGAPDASNAGSTVPPTAEGQVKLNGHQQEQELFLQAFEKPTQIYRYLRNRHETNPIFLNRTLSYMKERMSRNNKKRISFQVNSMLESITQKSEAVSQNYLHVIYDSLHEKLPARLDNESGEDLLQEQLLCEAGESVSVETTLYKITRSKRKDSTLDFQELLSKCSQIVYNPKDRVGEHATISIPLQTMRPMGEQHTLYKLLFRIKVLSPSTCNDENAETPPNKRSRPNEKMFGSELILYEKSSGFITEGEYEAMLQPLNSTSIKSFSPKKCTWETMPDSYIPLSLTYDVYQQSPMLKFHLTLSNEQLPEMISAPELQRYVQHLDAVAEMNYNNNNYNNNNNCSGLKNGSGGGNSTVCKTTPEHIQIVYNFMYSNNTRQQTEYTQELNCPWCGLDCLRLYALLKHLKLCHARFNFTYQPAGSGARIDVTINDAYDGSYAGSPYDLAGPSGSSFARTCGPVRRTSVTSLMVCRPRRQKTCLDEFLELDEDEISNQRSYITGHNRLYHHTETCLPVHPKELDIDSEGESDPLWLRQKTIQMIDEFSDVNEGEKELMKLWNLHVMRHGFVGDCQLPIACEMFLDAKGTEIVRKNLYRNFILHMCSLFDYGLIAAETVYKTVQKLQGLLSKYAAGQELMQRQREEQLKYWLDVGMHKKQEDPKTLKSPQKPAPPADQASTSSASTSGSGSGSSSMQPPKRMPAHLKRGSAASSPGVQSKGTENGTNGSNSSSSNSKNVAKKSADQPLSTLANTRERRSEYGQKRNVSGSRLAATPASKRKLSSKDNTVLNKRQRYSDGSPGTGIGNGHGGGSGSGANRNKSNNHSLPATSNNASSSSSNSKRAIARRRSTSERTKASGSTGGGAGGVRTRLSVPAKYERR</sequence>
<comment type="function">
    <text>Polycomb group (PcG) protein. While PcG proteins are generally required to maintain the transcriptionally repressive state of homeotic genes throughout development, this protein is specifically required during the first 6 hours of embryogenesis to establish the repressed state. Component of the Esc/E(z) complex, which methylates 'Lys-9' (H3K9me) and 'Lys-27' (H3K27me) of histone H3, leading to transcriptional repression of the affected target gene. The Esc/E(z) complex is necessary but not sufficient for the repression of homeotic target genes, suggesting that the recruitment of the distinct PRC1 complex is also required.</text>
</comment>
<comment type="subunit">
    <text evidence="3 4 5 7 9">Component of the polycomb repressive complex 2 (PRC2, also known as the Esc/E(Z) complex), composed of Caf1-55, esc, E(z), Su(z)12, and possibly pho (PubMed:12408863, PubMed:12408864). PRC2 associates with the accessory components Jarid2 and jing to form the PRC2 Jarid2-jing variant (PRC2.2) (PubMed:22354997). PRC2 may also associate with Pcl and HDAC1/Rpd3 during early embryogenesis (PubMed:12408863, PubMed:12408864, PubMed:12697833). This complex is distinct from the PRC1 complex, which contains many other PcG proteins like Pc, Ph, Psc, Su(z)2 (Probable). The two complexes however cooperate and interact together during the first 3 hours of development to establish PcG silencing (Probable).</text>
</comment>
<comment type="subcellular location">
    <subcellularLocation>
        <location evidence="10">Nucleus</location>
    </subcellularLocation>
    <subcellularLocation>
        <location evidence="7">Chromosome</location>
    </subcellularLocation>
</comment>
<comment type="alternative products">
    <event type="alternative splicing"/>
    <isoform>
        <id>Q9NJG9-1</id>
        <name>1</name>
        <name>B</name>
        <sequence type="displayed"/>
    </isoform>
    <isoform>
        <id>Q9NJG9-2</id>
        <name>2</name>
        <name>A</name>
        <sequence type="described" ref="VSP_007033 VSP_007034"/>
    </isoform>
</comment>
<comment type="similarity">
    <text evidence="9">Belongs to the VEFS (VRN2-EMF2-FIS2-SU(Z)12) family.</text>
</comment>